<proteinExistence type="inferred from homology"/>
<organism>
    <name type="scientific">Rickettsia rickettsii (strain Sheila Smith)</name>
    <dbReference type="NCBI Taxonomy" id="392021"/>
    <lineage>
        <taxon>Bacteria</taxon>
        <taxon>Pseudomonadati</taxon>
        <taxon>Pseudomonadota</taxon>
        <taxon>Alphaproteobacteria</taxon>
        <taxon>Rickettsiales</taxon>
        <taxon>Rickettsiaceae</taxon>
        <taxon>Rickettsieae</taxon>
        <taxon>Rickettsia</taxon>
        <taxon>spotted fever group</taxon>
    </lineage>
</organism>
<keyword id="KW-0963">Cytoplasm</keyword>
<keyword id="KW-0460">Magnesium</keyword>
<keyword id="KW-0479">Metal-binding</keyword>
<keyword id="KW-0548">Nucleotidyltransferase</keyword>
<keyword id="KW-0694">RNA-binding</keyword>
<keyword id="KW-0808">Transferase</keyword>
<comment type="function">
    <text evidence="1">Involved in mRNA degradation. Catalyzes the phosphorolysis of single-stranded polyribonucleotides processively in the 3'- to 5'-direction.</text>
</comment>
<comment type="catalytic activity">
    <reaction evidence="1">
        <text>RNA(n+1) + phosphate = RNA(n) + a ribonucleoside 5'-diphosphate</text>
        <dbReference type="Rhea" id="RHEA:22096"/>
        <dbReference type="Rhea" id="RHEA-COMP:14527"/>
        <dbReference type="Rhea" id="RHEA-COMP:17342"/>
        <dbReference type="ChEBI" id="CHEBI:43474"/>
        <dbReference type="ChEBI" id="CHEBI:57930"/>
        <dbReference type="ChEBI" id="CHEBI:140395"/>
        <dbReference type="EC" id="2.7.7.8"/>
    </reaction>
</comment>
<comment type="cofactor">
    <cofactor evidence="1">
        <name>Mg(2+)</name>
        <dbReference type="ChEBI" id="CHEBI:18420"/>
    </cofactor>
</comment>
<comment type="subcellular location">
    <subcellularLocation>
        <location evidence="1">Cytoplasm</location>
    </subcellularLocation>
</comment>
<comment type="similarity">
    <text evidence="1">Belongs to the polyribonucleotide nucleotidyltransferase family.</text>
</comment>
<feature type="chain" id="PRO_0000329819" description="Polyribonucleotide nucleotidyltransferase">
    <location>
        <begin position="1"/>
        <end position="748"/>
    </location>
</feature>
<feature type="domain" description="KH" evidence="1">
    <location>
        <begin position="554"/>
        <end position="613"/>
    </location>
</feature>
<feature type="domain" description="S1 motif" evidence="1">
    <location>
        <begin position="623"/>
        <end position="691"/>
    </location>
</feature>
<feature type="region of interest" description="Disordered" evidence="2">
    <location>
        <begin position="695"/>
        <end position="733"/>
    </location>
</feature>
<feature type="compositionally biased region" description="Polar residues" evidence="2">
    <location>
        <begin position="699"/>
        <end position="712"/>
    </location>
</feature>
<feature type="compositionally biased region" description="Basic and acidic residues" evidence="2">
    <location>
        <begin position="713"/>
        <end position="722"/>
    </location>
</feature>
<feature type="binding site" evidence="1">
    <location>
        <position position="487"/>
    </location>
    <ligand>
        <name>Mg(2+)</name>
        <dbReference type="ChEBI" id="CHEBI:18420"/>
    </ligand>
</feature>
<feature type="binding site" evidence="1">
    <location>
        <position position="493"/>
    </location>
    <ligand>
        <name>Mg(2+)</name>
        <dbReference type="ChEBI" id="CHEBI:18420"/>
    </ligand>
</feature>
<evidence type="ECO:0000255" key="1">
    <source>
        <dbReference type="HAMAP-Rule" id="MF_01595"/>
    </source>
</evidence>
<evidence type="ECO:0000256" key="2">
    <source>
        <dbReference type="SAM" id="MobiDB-lite"/>
    </source>
</evidence>
<sequence length="748" mass="82033">MFNEITKSVTWNGQVLELSTGKIARQADGAVTVKMGNSVLLCTAVVANKAKEGIGFLPLTINYREMAYAAGKIPGGFFKHEGKPSDREVLVSRLIDRPIRPLFHPAFVNETHVTCSVLSYDPETPVDILAIIGASAALSLSPAPYLEIVAASKVGLINGEFVLNPTLALLKTSQLDLVVAGTSDSVMMVESEAHLLSEEQMLEAVKFGFESFQPVIKIIKELAEEAKKPKLEMQALYPASLKKEIEKLFVKEIEQAFAMKSKQERSTNLDLITEKVFTHFVSDIENKKYSHYQIESALKAIESGILRNEILEKNRRIDGRSTTDIRQIACEIGLLPSAHGSALFTRGETQSLVSTTFGTSLDEQIVDSLEGEYKERFMLNYIFPPYSVNEAMPMKAPSRREVGHGKLAWRAINPILPNKVQFPYSIRVVAETTESNGSSSMATVCGSSLALMYAGVPIKAPVAGIAMGLVKEGKNFAVLSDILGDEDYFGDMDFKVAGTGEGITALQMDIKISGVDFKIMKVALEQARLGRLHILEQMNKVISKPNNELSKNAPSTTTIKIDKDKIRDIIGPGGKVIKEICETSGAKIDISDDGTVSVYASDRDKLKVALDKIKAIVVEPEIGEIFNGTVVKVLDSGAFINYVGNKDGFVHISEVSGERIETVSSVLKQGDIVKVKLIGFDNKGKAKLTIKNADKDKFSNNTKPKTSVNNTKDNSEPEQRHDSSKKRAWNEDNNAEIAEVITERKYFN</sequence>
<name>PNP_RICRS</name>
<reference key="1">
    <citation type="submission" date="2007-09" db="EMBL/GenBank/DDBJ databases">
        <title>Complete genome sequence of Rickettsia rickettsii.</title>
        <authorList>
            <person name="Madan A."/>
            <person name="Fahey J."/>
            <person name="Helton E."/>
            <person name="Ketteman M."/>
            <person name="Madan A."/>
            <person name="Rodrigues S."/>
            <person name="Sanchez A."/>
            <person name="Dasch G."/>
            <person name="Eremeeva M."/>
        </authorList>
    </citation>
    <scope>NUCLEOTIDE SEQUENCE [LARGE SCALE GENOMIC DNA]</scope>
    <source>
        <strain>Sheila Smith</strain>
    </source>
</reference>
<protein>
    <recommendedName>
        <fullName evidence="1">Polyribonucleotide nucleotidyltransferase</fullName>
        <ecNumber evidence="1">2.7.7.8</ecNumber>
    </recommendedName>
    <alternativeName>
        <fullName evidence="1">Polynucleotide phosphorylase</fullName>
        <shortName evidence="1">PNPase</shortName>
    </alternativeName>
</protein>
<dbReference type="EC" id="2.7.7.8" evidence="1"/>
<dbReference type="EMBL" id="CP000848">
    <property type="protein sequence ID" value="ABV76271.1"/>
    <property type="molecule type" value="Genomic_DNA"/>
</dbReference>
<dbReference type="RefSeq" id="WP_012150853.1">
    <property type="nucleotide sequence ID" value="NZ_CP121767.1"/>
</dbReference>
<dbReference type="SMR" id="A8GS96"/>
<dbReference type="GeneID" id="79937400"/>
<dbReference type="KEGG" id="rri:A1G_03770"/>
<dbReference type="HOGENOM" id="CLU_004217_2_2_5"/>
<dbReference type="Proteomes" id="UP000006832">
    <property type="component" value="Chromosome"/>
</dbReference>
<dbReference type="GO" id="GO:0005829">
    <property type="term" value="C:cytosol"/>
    <property type="evidence" value="ECO:0007669"/>
    <property type="project" value="TreeGrafter"/>
</dbReference>
<dbReference type="GO" id="GO:0000175">
    <property type="term" value="F:3'-5'-RNA exonuclease activity"/>
    <property type="evidence" value="ECO:0007669"/>
    <property type="project" value="TreeGrafter"/>
</dbReference>
<dbReference type="GO" id="GO:0000287">
    <property type="term" value="F:magnesium ion binding"/>
    <property type="evidence" value="ECO:0007669"/>
    <property type="project" value="UniProtKB-UniRule"/>
</dbReference>
<dbReference type="GO" id="GO:0004654">
    <property type="term" value="F:polyribonucleotide nucleotidyltransferase activity"/>
    <property type="evidence" value="ECO:0007669"/>
    <property type="project" value="UniProtKB-UniRule"/>
</dbReference>
<dbReference type="GO" id="GO:0003723">
    <property type="term" value="F:RNA binding"/>
    <property type="evidence" value="ECO:0007669"/>
    <property type="project" value="UniProtKB-UniRule"/>
</dbReference>
<dbReference type="GO" id="GO:0006402">
    <property type="term" value="P:mRNA catabolic process"/>
    <property type="evidence" value="ECO:0007669"/>
    <property type="project" value="UniProtKB-UniRule"/>
</dbReference>
<dbReference type="GO" id="GO:0006396">
    <property type="term" value="P:RNA processing"/>
    <property type="evidence" value="ECO:0007669"/>
    <property type="project" value="InterPro"/>
</dbReference>
<dbReference type="CDD" id="cd02393">
    <property type="entry name" value="KH-I_PNPase"/>
    <property type="match status" value="1"/>
</dbReference>
<dbReference type="CDD" id="cd11363">
    <property type="entry name" value="RNase_PH_PNPase_1"/>
    <property type="match status" value="1"/>
</dbReference>
<dbReference type="CDD" id="cd11364">
    <property type="entry name" value="RNase_PH_PNPase_2"/>
    <property type="match status" value="1"/>
</dbReference>
<dbReference type="FunFam" id="3.30.1370.10:FF:000001">
    <property type="entry name" value="Polyribonucleotide nucleotidyltransferase"/>
    <property type="match status" value="1"/>
</dbReference>
<dbReference type="FunFam" id="3.30.230.70:FF:000001">
    <property type="entry name" value="Polyribonucleotide nucleotidyltransferase"/>
    <property type="match status" value="1"/>
</dbReference>
<dbReference type="FunFam" id="3.30.230.70:FF:000002">
    <property type="entry name" value="Polyribonucleotide nucleotidyltransferase"/>
    <property type="match status" value="1"/>
</dbReference>
<dbReference type="FunFam" id="2.40.50.140:FF:000189">
    <property type="entry name" value="Polyribonucleotide nucleotidyltransferase, putative"/>
    <property type="match status" value="1"/>
</dbReference>
<dbReference type="Gene3D" id="3.30.230.70">
    <property type="entry name" value="GHMP Kinase, N-terminal domain"/>
    <property type="match status" value="2"/>
</dbReference>
<dbReference type="Gene3D" id="3.30.1370.10">
    <property type="entry name" value="K Homology domain, type 1"/>
    <property type="match status" value="1"/>
</dbReference>
<dbReference type="Gene3D" id="2.40.50.140">
    <property type="entry name" value="Nucleic acid-binding proteins"/>
    <property type="match status" value="1"/>
</dbReference>
<dbReference type="HAMAP" id="MF_01595">
    <property type="entry name" value="PNPase"/>
    <property type="match status" value="1"/>
</dbReference>
<dbReference type="InterPro" id="IPR001247">
    <property type="entry name" value="ExoRNase_PH_dom1"/>
</dbReference>
<dbReference type="InterPro" id="IPR015847">
    <property type="entry name" value="ExoRNase_PH_dom2"/>
</dbReference>
<dbReference type="InterPro" id="IPR036345">
    <property type="entry name" value="ExoRNase_PH_dom2_sf"/>
</dbReference>
<dbReference type="InterPro" id="IPR004087">
    <property type="entry name" value="KH_dom"/>
</dbReference>
<dbReference type="InterPro" id="IPR004088">
    <property type="entry name" value="KH_dom_type_1"/>
</dbReference>
<dbReference type="InterPro" id="IPR036612">
    <property type="entry name" value="KH_dom_type_1_sf"/>
</dbReference>
<dbReference type="InterPro" id="IPR012340">
    <property type="entry name" value="NA-bd_OB-fold"/>
</dbReference>
<dbReference type="InterPro" id="IPR012162">
    <property type="entry name" value="PNPase"/>
</dbReference>
<dbReference type="InterPro" id="IPR027408">
    <property type="entry name" value="PNPase/RNase_PH_dom_sf"/>
</dbReference>
<dbReference type="InterPro" id="IPR015848">
    <property type="entry name" value="PNPase_PH_RNA-bd_bac/org-type"/>
</dbReference>
<dbReference type="InterPro" id="IPR036456">
    <property type="entry name" value="PNPase_PH_RNA-bd_sf"/>
</dbReference>
<dbReference type="InterPro" id="IPR020568">
    <property type="entry name" value="Ribosomal_Su5_D2-typ_SF"/>
</dbReference>
<dbReference type="InterPro" id="IPR003029">
    <property type="entry name" value="S1_domain"/>
</dbReference>
<dbReference type="NCBIfam" id="TIGR03591">
    <property type="entry name" value="polynuc_phos"/>
    <property type="match status" value="1"/>
</dbReference>
<dbReference type="NCBIfam" id="NF008805">
    <property type="entry name" value="PRK11824.1"/>
    <property type="match status" value="1"/>
</dbReference>
<dbReference type="PANTHER" id="PTHR11252">
    <property type="entry name" value="POLYRIBONUCLEOTIDE NUCLEOTIDYLTRANSFERASE"/>
    <property type="match status" value="1"/>
</dbReference>
<dbReference type="PANTHER" id="PTHR11252:SF0">
    <property type="entry name" value="POLYRIBONUCLEOTIDE NUCLEOTIDYLTRANSFERASE 1, MITOCHONDRIAL"/>
    <property type="match status" value="1"/>
</dbReference>
<dbReference type="Pfam" id="PF00013">
    <property type="entry name" value="KH_1"/>
    <property type="match status" value="1"/>
</dbReference>
<dbReference type="Pfam" id="PF03726">
    <property type="entry name" value="PNPase"/>
    <property type="match status" value="1"/>
</dbReference>
<dbReference type="Pfam" id="PF01138">
    <property type="entry name" value="RNase_PH"/>
    <property type="match status" value="2"/>
</dbReference>
<dbReference type="Pfam" id="PF03725">
    <property type="entry name" value="RNase_PH_C"/>
    <property type="match status" value="1"/>
</dbReference>
<dbReference type="Pfam" id="PF00575">
    <property type="entry name" value="S1"/>
    <property type="match status" value="1"/>
</dbReference>
<dbReference type="PIRSF" id="PIRSF005499">
    <property type="entry name" value="PNPase"/>
    <property type="match status" value="1"/>
</dbReference>
<dbReference type="SMART" id="SM00322">
    <property type="entry name" value="KH"/>
    <property type="match status" value="1"/>
</dbReference>
<dbReference type="SMART" id="SM00316">
    <property type="entry name" value="S1"/>
    <property type="match status" value="1"/>
</dbReference>
<dbReference type="SUPFAM" id="SSF54791">
    <property type="entry name" value="Eukaryotic type KH-domain (KH-domain type I)"/>
    <property type="match status" value="1"/>
</dbReference>
<dbReference type="SUPFAM" id="SSF50249">
    <property type="entry name" value="Nucleic acid-binding proteins"/>
    <property type="match status" value="1"/>
</dbReference>
<dbReference type="SUPFAM" id="SSF46915">
    <property type="entry name" value="Polynucleotide phosphorylase/guanosine pentaphosphate synthase (PNPase/GPSI), domain 3"/>
    <property type="match status" value="1"/>
</dbReference>
<dbReference type="SUPFAM" id="SSF55666">
    <property type="entry name" value="Ribonuclease PH domain 2-like"/>
    <property type="match status" value="2"/>
</dbReference>
<dbReference type="SUPFAM" id="SSF54211">
    <property type="entry name" value="Ribosomal protein S5 domain 2-like"/>
    <property type="match status" value="2"/>
</dbReference>
<dbReference type="PROSITE" id="PS50084">
    <property type="entry name" value="KH_TYPE_1"/>
    <property type="match status" value="1"/>
</dbReference>
<dbReference type="PROSITE" id="PS50126">
    <property type="entry name" value="S1"/>
    <property type="match status" value="1"/>
</dbReference>
<gene>
    <name evidence="1" type="primary">pnp</name>
    <name type="ordered locus">A1G_03770</name>
</gene>
<accession>A8GS96</accession>